<organism>
    <name type="scientific">Mus musculus</name>
    <name type="common">Mouse</name>
    <dbReference type="NCBI Taxonomy" id="10090"/>
    <lineage>
        <taxon>Eukaryota</taxon>
        <taxon>Metazoa</taxon>
        <taxon>Chordata</taxon>
        <taxon>Craniata</taxon>
        <taxon>Vertebrata</taxon>
        <taxon>Euteleostomi</taxon>
        <taxon>Mammalia</taxon>
        <taxon>Eutheria</taxon>
        <taxon>Euarchontoglires</taxon>
        <taxon>Glires</taxon>
        <taxon>Rodentia</taxon>
        <taxon>Myomorpha</taxon>
        <taxon>Muroidea</taxon>
        <taxon>Muridae</taxon>
        <taxon>Murinae</taxon>
        <taxon>Mus</taxon>
        <taxon>Mus</taxon>
    </lineage>
</organism>
<sequence length="407" mass="46512">MSHRKFSAPRHGHLGFLPHKRSRRHRGKVKSWPRDDPSQPVHLTAFLGYKAGMTHTLREVHRPGLKISKREEVEAVTIVETPPLVVVGVVGYVATPRGLRSFKTIFAEHLSDECRRRFYKDWHKSKKKAFTKACKRWRDADGKKQLQKDFAAMKKYCKVIRVIVHTQMKLLPFRQKKAHIMEIQLNGGTVAEKVAWVQARMEKQVPVHSVFSQSEVIDVIAVTKGRGVKGVTSRWHTKKLPRKTHKGLRKVACIGAWHPARVGCSIARAGQKGYHHRTELNKKIYRIGRGLHMEDGKMVRNNASTSYDVTDKSITPLGGFPHYGEVNNDFIMLKGCIAGTKKRVITLRKSLLVHHSRRALENIELKFIDTTSKFGHGCFQTAQEKRAFMGPQKKHLEKEKPETLGNM</sequence>
<name>RL3L_MOUSE</name>
<dbReference type="EMBL" id="AK002393">
    <property type="protein sequence ID" value="BAB22066.1"/>
    <property type="molecule type" value="mRNA"/>
</dbReference>
<dbReference type="EMBL" id="AK004280">
    <property type="protein sequence ID" value="BAB23247.1"/>
    <property type="molecule type" value="mRNA"/>
</dbReference>
<dbReference type="EMBL" id="BC085243">
    <property type="protein sequence ID" value="AAH85243.1"/>
    <property type="molecule type" value="mRNA"/>
</dbReference>
<dbReference type="EMBL" id="BC145876">
    <property type="protein sequence ID" value="AAI45877.1"/>
    <property type="molecule type" value="mRNA"/>
</dbReference>
<dbReference type="EMBL" id="BC145878">
    <property type="protein sequence ID" value="AAI45879.1"/>
    <property type="molecule type" value="mRNA"/>
</dbReference>
<dbReference type="CCDS" id="CCDS37494.1">
    <molecule id="E9PWZ3-2"/>
</dbReference>
<dbReference type="CCDS" id="CCDS50019.1">
    <molecule id="E9PWZ3-1"/>
</dbReference>
<dbReference type="RefSeq" id="NP_001157417.1">
    <molecule id="E9PWZ3-1"/>
    <property type="nucleotide sequence ID" value="NM_001163945.2"/>
</dbReference>
<dbReference type="RefSeq" id="NP_079701.1">
    <molecule id="E9PWZ3-2"/>
    <property type="nucleotide sequence ID" value="NM_025425.5"/>
</dbReference>
<dbReference type="SMR" id="E9PWZ3"/>
<dbReference type="ComplexPortal" id="CPX-7663">
    <property type="entry name" value="60S cytosolic large ribosomal subunit, striated muscle variant"/>
</dbReference>
<dbReference type="FunCoup" id="E9PWZ3">
    <property type="interactions" value="170"/>
</dbReference>
<dbReference type="STRING" id="10090.ENSMUSP00000129325"/>
<dbReference type="GlyGen" id="E9PWZ3">
    <property type="glycosylation" value="1 site, 1 O-linked glycan (1 site)"/>
</dbReference>
<dbReference type="PhosphoSitePlus" id="E9PWZ3"/>
<dbReference type="jPOST" id="E9PWZ3"/>
<dbReference type="PaxDb" id="10090-ENSMUSP00000129325"/>
<dbReference type="PeptideAtlas" id="E9PWZ3"/>
<dbReference type="ProteomicsDB" id="336686"/>
<dbReference type="ProteomicsDB" id="353035"/>
<dbReference type="Antibodypedia" id="23334">
    <property type="antibodies" value="67 antibodies from 22 providers"/>
</dbReference>
<dbReference type="DNASU" id="66211"/>
<dbReference type="Ensembl" id="ENSMUST00000045186.11">
    <molecule id="E9PWZ3-2"/>
    <property type="protein sequence ID" value="ENSMUSP00000038326.9"/>
    <property type="gene ID" value="ENSMUSG00000002500.16"/>
</dbReference>
<dbReference type="Ensembl" id="ENSMUST00000170239.9">
    <molecule id="E9PWZ3-1"/>
    <property type="protein sequence ID" value="ENSMUSP00000129325.2"/>
    <property type="gene ID" value="ENSMUSG00000002500.16"/>
</dbReference>
<dbReference type="GeneID" id="66211"/>
<dbReference type="KEGG" id="mmu:66211"/>
<dbReference type="UCSC" id="uc008ayf.2">
    <molecule id="E9PWZ3-1"/>
    <property type="organism name" value="mouse"/>
</dbReference>
<dbReference type="AGR" id="MGI:1913461"/>
<dbReference type="CTD" id="6123"/>
<dbReference type="MGI" id="MGI:1913461">
    <property type="gene designation" value="Rpl3l"/>
</dbReference>
<dbReference type="VEuPathDB" id="HostDB:ENSMUSG00000002500"/>
<dbReference type="eggNOG" id="KOG0746">
    <property type="taxonomic scope" value="Eukaryota"/>
</dbReference>
<dbReference type="GeneTree" id="ENSGT00390000017606"/>
<dbReference type="HOGENOM" id="CLU_033361_1_0_1"/>
<dbReference type="InParanoid" id="E9PWZ3"/>
<dbReference type="OMA" id="HVEDGKM"/>
<dbReference type="OrthoDB" id="1611972at2759"/>
<dbReference type="PhylomeDB" id="E9PWZ3"/>
<dbReference type="TreeFam" id="TF300555"/>
<dbReference type="Reactome" id="R-MMU-156827">
    <property type="pathway name" value="L13a-mediated translational silencing of Ceruloplasmin expression"/>
</dbReference>
<dbReference type="Reactome" id="R-MMU-1799339">
    <property type="pathway name" value="SRP-dependent cotranslational protein targeting to membrane"/>
</dbReference>
<dbReference type="Reactome" id="R-MMU-6791226">
    <property type="pathway name" value="Major pathway of rRNA processing in the nucleolus and cytosol"/>
</dbReference>
<dbReference type="Reactome" id="R-MMU-72689">
    <property type="pathway name" value="Formation of a pool of free 40S subunits"/>
</dbReference>
<dbReference type="Reactome" id="R-MMU-72706">
    <property type="pathway name" value="GTP hydrolysis and joining of the 60S ribosomal subunit"/>
</dbReference>
<dbReference type="Reactome" id="R-MMU-975956">
    <property type="pathway name" value="Nonsense Mediated Decay (NMD) independent of the Exon Junction Complex (EJC)"/>
</dbReference>
<dbReference type="Reactome" id="R-MMU-975957">
    <property type="pathway name" value="Nonsense Mediated Decay (NMD) enhanced by the Exon Junction Complex (EJC)"/>
</dbReference>
<dbReference type="BioGRID-ORCS" id="66211">
    <property type="hits" value="6 hits in 77 CRISPR screens"/>
</dbReference>
<dbReference type="ChiTaRS" id="Rpl3l">
    <property type="organism name" value="mouse"/>
</dbReference>
<dbReference type="PRO" id="PR:E9PWZ3"/>
<dbReference type="Proteomes" id="UP000000589">
    <property type="component" value="Chromosome 17"/>
</dbReference>
<dbReference type="RNAct" id="E9PWZ3">
    <property type="molecule type" value="protein"/>
</dbReference>
<dbReference type="Bgee" id="ENSMUSG00000002500">
    <property type="expression patterns" value="Expressed in interventricular septum and 75 other cell types or tissues"/>
</dbReference>
<dbReference type="ExpressionAtlas" id="E9PWZ3">
    <property type="expression patterns" value="baseline and differential"/>
</dbReference>
<dbReference type="GO" id="GO:0022625">
    <property type="term" value="C:cytosolic large ribosomal subunit"/>
    <property type="evidence" value="ECO:0000314"/>
    <property type="project" value="UniProtKB"/>
</dbReference>
<dbReference type="GO" id="GO:0003735">
    <property type="term" value="F:structural constituent of ribosome"/>
    <property type="evidence" value="ECO:0000314"/>
    <property type="project" value="UniProtKB"/>
</dbReference>
<dbReference type="GO" id="GO:0010832">
    <property type="term" value="P:negative regulation of myotube differentiation"/>
    <property type="evidence" value="ECO:0000315"/>
    <property type="project" value="UniProtKB"/>
</dbReference>
<dbReference type="GO" id="GO:0016202">
    <property type="term" value="P:regulation of striated muscle tissue development"/>
    <property type="evidence" value="ECO:0000315"/>
    <property type="project" value="UniProtKB"/>
</dbReference>
<dbReference type="GO" id="GO:0006412">
    <property type="term" value="P:translation"/>
    <property type="evidence" value="ECO:0007669"/>
    <property type="project" value="InterPro"/>
</dbReference>
<dbReference type="FunFam" id="2.40.30.10:FF:000079">
    <property type="entry name" value="60S ribosomal protein L3"/>
    <property type="match status" value="1"/>
</dbReference>
<dbReference type="FunFam" id="3.30.1430.10:FF:000001">
    <property type="entry name" value="60S ribosomal protein L3"/>
    <property type="match status" value="1"/>
</dbReference>
<dbReference type="FunFam" id="4.10.960.10:FF:000001">
    <property type="entry name" value="60S ribosomal protein L3"/>
    <property type="match status" value="1"/>
</dbReference>
<dbReference type="FunFam" id="4.10.960.10:FF:000002">
    <property type="entry name" value="60S ribosomal protein L3"/>
    <property type="match status" value="1"/>
</dbReference>
<dbReference type="FunFam" id="2.40.30.10:FF:000351">
    <property type="entry name" value="Ribosomal protein L3"/>
    <property type="match status" value="1"/>
</dbReference>
<dbReference type="Gene3D" id="3.30.1430.10">
    <property type="match status" value="1"/>
</dbReference>
<dbReference type="Gene3D" id="4.10.960.10">
    <property type="entry name" value="Ribosomal protein L3, domain 3"/>
    <property type="match status" value="1"/>
</dbReference>
<dbReference type="Gene3D" id="2.40.30.10">
    <property type="entry name" value="Translation factors"/>
    <property type="match status" value="1"/>
</dbReference>
<dbReference type="InterPro" id="IPR045077">
    <property type="entry name" value="L3_arc_euk"/>
</dbReference>
<dbReference type="InterPro" id="IPR044892">
    <property type="entry name" value="Ribosomal_L3_dom_3_arc_sf"/>
</dbReference>
<dbReference type="InterPro" id="IPR000597">
    <property type="entry name" value="Ribosomal_uL3"/>
</dbReference>
<dbReference type="InterPro" id="IPR019926">
    <property type="entry name" value="Ribosomal_uL3_CS"/>
</dbReference>
<dbReference type="InterPro" id="IPR009000">
    <property type="entry name" value="Transl_B-barrel_sf"/>
</dbReference>
<dbReference type="PANTHER" id="PTHR11363">
    <property type="entry name" value="60S RIBOSOMAL PROTEIN L3-RELATED"/>
    <property type="match status" value="1"/>
</dbReference>
<dbReference type="PANTHER" id="PTHR11363:SF7">
    <property type="entry name" value="RIBOSOMAL PROTEIN UL3-LIKE"/>
    <property type="match status" value="1"/>
</dbReference>
<dbReference type="Pfam" id="PF00297">
    <property type="entry name" value="Ribosomal_L3"/>
    <property type="match status" value="1"/>
</dbReference>
<dbReference type="SUPFAM" id="SSF50447">
    <property type="entry name" value="Translation proteins"/>
    <property type="match status" value="1"/>
</dbReference>
<dbReference type="PROSITE" id="PS00474">
    <property type="entry name" value="RIBOSOMAL_L3"/>
    <property type="match status" value="1"/>
</dbReference>
<proteinExistence type="evidence at protein level"/>
<gene>
    <name evidence="6 8" type="primary">Rpl3l</name>
</gene>
<reference key="1">
    <citation type="journal article" date="2005" name="Science">
        <title>The transcriptional landscape of the mammalian genome.</title>
        <authorList>
            <person name="Carninci P."/>
            <person name="Kasukawa T."/>
            <person name="Katayama S."/>
            <person name="Gough J."/>
            <person name="Frith M.C."/>
            <person name="Maeda N."/>
            <person name="Oyama R."/>
            <person name="Ravasi T."/>
            <person name="Lenhard B."/>
            <person name="Wells C."/>
            <person name="Kodzius R."/>
            <person name="Shimokawa K."/>
            <person name="Bajic V.B."/>
            <person name="Brenner S.E."/>
            <person name="Batalov S."/>
            <person name="Forrest A.R."/>
            <person name="Zavolan M."/>
            <person name="Davis M.J."/>
            <person name="Wilming L.G."/>
            <person name="Aidinis V."/>
            <person name="Allen J.E."/>
            <person name="Ambesi-Impiombato A."/>
            <person name="Apweiler R."/>
            <person name="Aturaliya R.N."/>
            <person name="Bailey T.L."/>
            <person name="Bansal M."/>
            <person name="Baxter L."/>
            <person name="Beisel K.W."/>
            <person name="Bersano T."/>
            <person name="Bono H."/>
            <person name="Chalk A.M."/>
            <person name="Chiu K.P."/>
            <person name="Choudhary V."/>
            <person name="Christoffels A."/>
            <person name="Clutterbuck D.R."/>
            <person name="Crowe M.L."/>
            <person name="Dalla E."/>
            <person name="Dalrymple B.P."/>
            <person name="de Bono B."/>
            <person name="Della Gatta G."/>
            <person name="di Bernardo D."/>
            <person name="Down T."/>
            <person name="Engstrom P."/>
            <person name="Fagiolini M."/>
            <person name="Faulkner G."/>
            <person name="Fletcher C.F."/>
            <person name="Fukushima T."/>
            <person name="Furuno M."/>
            <person name="Futaki S."/>
            <person name="Gariboldi M."/>
            <person name="Georgii-Hemming P."/>
            <person name="Gingeras T.R."/>
            <person name="Gojobori T."/>
            <person name="Green R.E."/>
            <person name="Gustincich S."/>
            <person name="Harbers M."/>
            <person name="Hayashi Y."/>
            <person name="Hensch T.K."/>
            <person name="Hirokawa N."/>
            <person name="Hill D."/>
            <person name="Huminiecki L."/>
            <person name="Iacono M."/>
            <person name="Ikeo K."/>
            <person name="Iwama A."/>
            <person name="Ishikawa T."/>
            <person name="Jakt M."/>
            <person name="Kanapin A."/>
            <person name="Katoh M."/>
            <person name="Kawasawa Y."/>
            <person name="Kelso J."/>
            <person name="Kitamura H."/>
            <person name="Kitano H."/>
            <person name="Kollias G."/>
            <person name="Krishnan S.P."/>
            <person name="Kruger A."/>
            <person name="Kummerfeld S.K."/>
            <person name="Kurochkin I.V."/>
            <person name="Lareau L.F."/>
            <person name="Lazarevic D."/>
            <person name="Lipovich L."/>
            <person name="Liu J."/>
            <person name="Liuni S."/>
            <person name="McWilliam S."/>
            <person name="Madan Babu M."/>
            <person name="Madera M."/>
            <person name="Marchionni L."/>
            <person name="Matsuda H."/>
            <person name="Matsuzawa S."/>
            <person name="Miki H."/>
            <person name="Mignone F."/>
            <person name="Miyake S."/>
            <person name="Morris K."/>
            <person name="Mottagui-Tabar S."/>
            <person name="Mulder N."/>
            <person name="Nakano N."/>
            <person name="Nakauchi H."/>
            <person name="Ng P."/>
            <person name="Nilsson R."/>
            <person name="Nishiguchi S."/>
            <person name="Nishikawa S."/>
            <person name="Nori F."/>
            <person name="Ohara O."/>
            <person name="Okazaki Y."/>
            <person name="Orlando V."/>
            <person name="Pang K.C."/>
            <person name="Pavan W.J."/>
            <person name="Pavesi G."/>
            <person name="Pesole G."/>
            <person name="Petrovsky N."/>
            <person name="Piazza S."/>
            <person name="Reed J."/>
            <person name="Reid J.F."/>
            <person name="Ring B.Z."/>
            <person name="Ringwald M."/>
            <person name="Rost B."/>
            <person name="Ruan Y."/>
            <person name="Salzberg S.L."/>
            <person name="Sandelin A."/>
            <person name="Schneider C."/>
            <person name="Schoenbach C."/>
            <person name="Sekiguchi K."/>
            <person name="Semple C.A."/>
            <person name="Seno S."/>
            <person name="Sessa L."/>
            <person name="Sheng Y."/>
            <person name="Shibata Y."/>
            <person name="Shimada H."/>
            <person name="Shimada K."/>
            <person name="Silva D."/>
            <person name="Sinclair B."/>
            <person name="Sperling S."/>
            <person name="Stupka E."/>
            <person name="Sugiura K."/>
            <person name="Sultana R."/>
            <person name="Takenaka Y."/>
            <person name="Taki K."/>
            <person name="Tammoja K."/>
            <person name="Tan S.L."/>
            <person name="Tang S."/>
            <person name="Taylor M.S."/>
            <person name="Tegner J."/>
            <person name="Teichmann S.A."/>
            <person name="Ueda H.R."/>
            <person name="van Nimwegen E."/>
            <person name="Verardo R."/>
            <person name="Wei C.L."/>
            <person name="Yagi K."/>
            <person name="Yamanishi H."/>
            <person name="Zabarovsky E."/>
            <person name="Zhu S."/>
            <person name="Zimmer A."/>
            <person name="Hide W."/>
            <person name="Bult C."/>
            <person name="Grimmond S.M."/>
            <person name="Teasdale R.D."/>
            <person name="Liu E.T."/>
            <person name="Brusic V."/>
            <person name="Quackenbush J."/>
            <person name="Wahlestedt C."/>
            <person name="Mattick J.S."/>
            <person name="Hume D.A."/>
            <person name="Kai C."/>
            <person name="Sasaki D."/>
            <person name="Tomaru Y."/>
            <person name="Fukuda S."/>
            <person name="Kanamori-Katayama M."/>
            <person name="Suzuki M."/>
            <person name="Aoki J."/>
            <person name="Arakawa T."/>
            <person name="Iida J."/>
            <person name="Imamura K."/>
            <person name="Itoh M."/>
            <person name="Kato T."/>
            <person name="Kawaji H."/>
            <person name="Kawagashira N."/>
            <person name="Kawashima T."/>
            <person name="Kojima M."/>
            <person name="Kondo S."/>
            <person name="Konno H."/>
            <person name="Nakano K."/>
            <person name="Ninomiya N."/>
            <person name="Nishio T."/>
            <person name="Okada M."/>
            <person name="Plessy C."/>
            <person name="Shibata K."/>
            <person name="Shiraki T."/>
            <person name="Suzuki S."/>
            <person name="Tagami M."/>
            <person name="Waki K."/>
            <person name="Watahiki A."/>
            <person name="Okamura-Oho Y."/>
            <person name="Suzuki H."/>
            <person name="Kawai J."/>
            <person name="Hayashizaki Y."/>
        </authorList>
    </citation>
    <scope>NUCLEOTIDE SEQUENCE [LARGE SCALE MRNA] (ISOFORM 2)</scope>
    <source>
        <strain>C57BL/6J</strain>
        <tissue>Kidney</tissue>
    </source>
</reference>
<reference key="2">
    <citation type="journal article" date="2009" name="PLoS Biol.">
        <title>Lineage-specific biology revealed by a finished genome assembly of the mouse.</title>
        <authorList>
            <person name="Church D.M."/>
            <person name="Goodstadt L."/>
            <person name="Hillier L.W."/>
            <person name="Zody M.C."/>
            <person name="Goldstein S."/>
            <person name="She X."/>
            <person name="Bult C.J."/>
            <person name="Agarwala R."/>
            <person name="Cherry J.L."/>
            <person name="DiCuccio M."/>
            <person name="Hlavina W."/>
            <person name="Kapustin Y."/>
            <person name="Meric P."/>
            <person name="Maglott D."/>
            <person name="Birtle Z."/>
            <person name="Marques A.C."/>
            <person name="Graves T."/>
            <person name="Zhou S."/>
            <person name="Teague B."/>
            <person name="Potamousis K."/>
            <person name="Churas C."/>
            <person name="Place M."/>
            <person name="Herschleb J."/>
            <person name="Runnheim R."/>
            <person name="Forrest D."/>
            <person name="Amos-Landgraf J."/>
            <person name="Schwartz D.C."/>
            <person name="Cheng Z."/>
            <person name="Lindblad-Toh K."/>
            <person name="Eichler E.E."/>
            <person name="Ponting C.P."/>
        </authorList>
    </citation>
    <scope>NUCLEOTIDE SEQUENCE [LARGE SCALE GENOMIC DNA]</scope>
    <source>
        <strain>C57BL/6J</strain>
    </source>
</reference>
<reference key="3">
    <citation type="journal article" date="2004" name="Genome Res.">
        <title>The status, quality, and expansion of the NIH full-length cDNA project: the Mammalian Gene Collection (MGC).</title>
        <authorList>
            <consortium name="The MGC Project Team"/>
        </authorList>
    </citation>
    <scope>NUCLEOTIDE SEQUENCE [LARGE SCALE MRNA] (ISOFORM 2)</scope>
    <scope>NUCLEOTIDE SEQUENCE [LARGE SCALE MRNA] OF 127-407 (ISOFORM 1)</scope>
    <source>
        <tissue>Brain</tissue>
        <tissue>Jaw</tissue>
        <tissue>Limb</tissue>
    </source>
</reference>
<reference key="4">
    <citation type="journal article" date="2016" name="J. Cell. Physiol.">
        <title>Expression of muscle-specific ribosomal protein L3-like impairs myotube growth.</title>
        <authorList>
            <person name="Chaillou T."/>
            <person name="Zhang X."/>
            <person name="McCarthy J.J."/>
        </authorList>
    </citation>
    <scope>FUNCTION</scope>
    <scope>TISSUE SPECIFICITY</scope>
    <scope>INDUCTION</scope>
</reference>
<reference key="5">
    <citation type="journal article" date="2021" name="Nucleic Acid Ther.">
        <title>Knockdown of muscle-specific ribosomal protein L3-Like enhances muscle function in healthy and dystrophic mice.</title>
        <authorList>
            <person name="Kao B.R."/>
            <person name="Malerba A."/>
            <person name="Lu-Nguyen N.B."/>
            <person name="Harish P."/>
            <person name="McCarthy J.J."/>
            <person name="Dickson G."/>
            <person name="Popplewell L.J."/>
        </authorList>
    </citation>
    <scope>FUNCTION</scope>
</reference>
<reference key="6">
    <citation type="journal article" date="2022" name="Nature">
        <title>A male germ-cell-specific ribosome controls male fertility.</title>
        <authorList>
            <person name="Li H."/>
            <person name="Huo Y."/>
            <person name="He X."/>
            <person name="Yao L."/>
            <person name="Zhang H."/>
            <person name="Cui Y."/>
            <person name="Xiao H."/>
            <person name="Xie W."/>
            <person name="Zhang D."/>
            <person name="Wang Y."/>
            <person name="Zhang S."/>
            <person name="Tu H."/>
            <person name="Cheng Y."/>
            <person name="Guo Y."/>
            <person name="Cao X."/>
            <person name="Zhu Y."/>
            <person name="Jiang T."/>
            <person name="Guo X."/>
            <person name="Qin Y."/>
            <person name="Sha J."/>
        </authorList>
    </citation>
    <scope>FUNCTION</scope>
    <scope>SUBUNIT</scope>
    <scope>TISSUE SPECIFICITY</scope>
</reference>
<evidence type="ECO:0000250" key="1">
    <source>
        <dbReference type="UniProtKB" id="P46777"/>
    </source>
</evidence>
<evidence type="ECO:0000256" key="2">
    <source>
        <dbReference type="SAM" id="MobiDB-lite"/>
    </source>
</evidence>
<evidence type="ECO:0000269" key="3">
    <source>
    </source>
</evidence>
<evidence type="ECO:0000269" key="4">
    <source>
    </source>
</evidence>
<evidence type="ECO:0000269" key="5">
    <source>
    </source>
</evidence>
<evidence type="ECO:0000303" key="6">
    <source>
    </source>
</evidence>
<evidence type="ECO:0000305" key="7"/>
<evidence type="ECO:0000312" key="8">
    <source>
        <dbReference type="MGI" id="MGI:1913461"/>
    </source>
</evidence>
<feature type="chain" id="PRO_0000457813" description="Large ribosomal subunit protein uL3-like">
    <location>
        <begin position="1"/>
        <end position="407"/>
    </location>
</feature>
<feature type="region of interest" description="Disordered" evidence="2">
    <location>
        <begin position="1"/>
        <end position="37"/>
    </location>
</feature>
<feature type="compositionally biased region" description="Basic residues" evidence="2">
    <location>
        <begin position="1"/>
        <end position="31"/>
    </location>
</feature>
<feature type="splice variant" id="VSP_061845" description="In isoform 2.">
    <location>
        <begin position="1"/>
        <end position="167"/>
    </location>
</feature>
<keyword id="KW-0025">Alternative splicing</keyword>
<keyword id="KW-1185">Reference proteome</keyword>
<keyword id="KW-0687">Ribonucleoprotein</keyword>
<keyword id="KW-0689">Ribosomal protein</keyword>
<protein>
    <recommendedName>
        <fullName evidence="7">Large ribosomal subunit protein uL3-like</fullName>
    </recommendedName>
    <alternativeName>
        <fullName evidence="6">60S ribosomal protein L3-like</fullName>
    </alternativeName>
</protein>
<accession>E9PWZ3</accession>
<accession>Q5U470</accession>
<accession>Q9CQ09</accession>
<comment type="function">
    <text evidence="3 4 5">Heart- and skeletal muscle-specific component of the ribosome, which regulates muscle function (PubMed:26684695, PubMed:34081545, PubMed:36517592). Component of the large ribosomal subunit in striated muscle cells: replaces the RPL3 paralog in the ribosome in these cells (PubMed:36517592). The ribosome is a large ribonucleoprotein complex responsible for the synthesis of proteins in the cell (PubMed:36517592). Inhibits myotube growth and muscle function (PubMed:26684695, PubMed:34081545).</text>
</comment>
<comment type="subunit">
    <text evidence="1">Component of the large ribosomal subunit (LSU). Part of a LSU subcomplex, the 5S RNP which is composed of the 5S RNA, RPL5 and RPL11. Interacts with NVL in an ATP-dependent manner. Interacts with RRP1B (By similarity). Interacts with IPO5, IPO7 and KPNB1; these interactions may be involved in RPL5 nuclear import for the assembly of ribosomal subunits (By similarity). Interacts with RRP1B (By similarity).</text>
</comment>
<comment type="alternative products">
    <event type="alternative splicing"/>
    <isoform>
        <id>E9PWZ3-1</id>
        <name>1</name>
        <sequence type="displayed"/>
    </isoform>
    <isoform>
        <id>E9PWZ3-2</id>
        <name>2</name>
        <sequence type="described" ref="VSP_061845"/>
    </isoform>
</comment>
<comment type="tissue specificity">
    <text evidence="3 5">Expression is restricted to striated muscles.</text>
</comment>
<comment type="induction">
    <text evidence="3">Expression in skeletal muscle is down-regulated in response to a hypertrophic stimulus.</text>
</comment>
<comment type="similarity">
    <text evidence="7">Belongs to the universal ribosomal protein uL3 family.</text>
</comment>